<feature type="transit peptide" description="Mitochondrion" evidence="2">
    <location>
        <begin position="1"/>
        <end position="40"/>
    </location>
</feature>
<feature type="chain" id="PRO_0000002418" description="ATP synthase mitochondrial F1 complex assembly factor 2">
    <location>
        <begin position="41"/>
        <end position="289"/>
    </location>
</feature>
<feature type="region of interest" description="Disordered" evidence="3">
    <location>
        <begin position="13"/>
        <end position="40"/>
    </location>
</feature>
<feature type="modified residue" description="N6-succinyllysine" evidence="1">
    <location>
        <position position="133"/>
    </location>
</feature>
<feature type="sequence variant" id="VAR_023386" description="In MC5DN1; dbSNP:rs104894554." evidence="5">
    <original>W</original>
    <variation>R</variation>
    <location>
        <position position="94"/>
    </location>
</feature>
<gene>
    <name evidence="10" type="primary">ATPAF2</name>
    <name evidence="7" type="synonym">ATP12</name>
    <name type="ORF">LP3663</name>
</gene>
<sequence>MWRSCLRLRDGGRRLLNRPAGGPSASMSPGPTIPSPARAYAPPTERKRFYQNVSITQGEGGFEINLDHRKLKTPQAKLFTVPSEALAIAVATEWDSQQDTIKYYTMHLTTLCNTSLDNPTQRNKDQLIRAAVKFLDTDTICYRVEEPETLVELQRNEWDPIIEWAEKRYGVEISSSTSIMGPSIPAKTREVLVSHLASYNTWALQGIEFVAAQLKSMVLTLGLIDLRLTVEQAVLLSRLEEEYQIQKWGNIEWAHDYELQELRARTAAGTLFIHLCSESTTVKHKLLKE</sequence>
<dbReference type="EMBL" id="AY203943">
    <property type="protein sequence ID" value="AAP34466.1"/>
    <property type="status" value="ALT_FRAME"/>
    <property type="molecule type" value="mRNA"/>
</dbReference>
<dbReference type="EMBL" id="AK290257">
    <property type="protein sequence ID" value="BAF82946.1"/>
    <property type="molecule type" value="mRNA"/>
</dbReference>
<dbReference type="EMBL" id="AC087163">
    <property type="status" value="NOT_ANNOTATED_CDS"/>
    <property type="molecule type" value="Genomic_DNA"/>
</dbReference>
<dbReference type="EMBL" id="CH471196">
    <property type="protein sequence ID" value="EAW55680.1"/>
    <property type="molecule type" value="Genomic_DNA"/>
</dbReference>
<dbReference type="EMBL" id="BC004114">
    <property type="protein sequence ID" value="AAH04114.1"/>
    <property type="molecule type" value="mRNA"/>
</dbReference>
<dbReference type="EMBL" id="BC032126">
    <property type="protein sequence ID" value="AAH32126.1"/>
    <property type="molecule type" value="mRNA"/>
</dbReference>
<dbReference type="CCDS" id="CCDS32585.1"/>
<dbReference type="RefSeq" id="NP_663729.1">
    <property type="nucleotide sequence ID" value="NM_145691.4"/>
</dbReference>
<dbReference type="SMR" id="Q8N5M1"/>
<dbReference type="BioGRID" id="124858">
    <property type="interactions" value="118"/>
</dbReference>
<dbReference type="FunCoup" id="Q8N5M1">
    <property type="interactions" value="2951"/>
</dbReference>
<dbReference type="IntAct" id="Q8N5M1">
    <property type="interactions" value="106"/>
</dbReference>
<dbReference type="MINT" id="Q8N5M1"/>
<dbReference type="STRING" id="9606.ENSP00000417190"/>
<dbReference type="GlyGen" id="Q8N5M1">
    <property type="glycosylation" value="2 sites, 1 O-linked glycan (1 site)"/>
</dbReference>
<dbReference type="iPTMnet" id="Q8N5M1"/>
<dbReference type="PhosphoSitePlus" id="Q8N5M1"/>
<dbReference type="SwissPalm" id="Q8N5M1"/>
<dbReference type="BioMuta" id="ATPAF2"/>
<dbReference type="DMDM" id="73917623"/>
<dbReference type="jPOST" id="Q8N5M1"/>
<dbReference type="MassIVE" id="Q8N5M1"/>
<dbReference type="PaxDb" id="9606-ENSP00000417190"/>
<dbReference type="PeptideAtlas" id="Q8N5M1"/>
<dbReference type="ProteomicsDB" id="72074"/>
<dbReference type="Pumba" id="Q8N5M1"/>
<dbReference type="Antibodypedia" id="13429">
    <property type="antibodies" value="137 antibodies from 24 providers"/>
</dbReference>
<dbReference type="DNASU" id="91647"/>
<dbReference type="Ensembl" id="ENST00000474627.8">
    <property type="protein sequence ID" value="ENSP00000417190.2"/>
    <property type="gene ID" value="ENSG00000171953.16"/>
</dbReference>
<dbReference type="GeneID" id="91647"/>
<dbReference type="KEGG" id="hsa:91647"/>
<dbReference type="MANE-Select" id="ENST00000474627.8">
    <property type="protein sequence ID" value="ENSP00000417190.2"/>
    <property type="RefSeq nucleotide sequence ID" value="NM_145691.4"/>
    <property type="RefSeq protein sequence ID" value="NP_663729.1"/>
</dbReference>
<dbReference type="UCSC" id="uc002gse.2">
    <property type="organism name" value="human"/>
</dbReference>
<dbReference type="AGR" id="HGNC:18802"/>
<dbReference type="CTD" id="91647"/>
<dbReference type="DisGeNET" id="91647"/>
<dbReference type="GeneCards" id="ATPAF2"/>
<dbReference type="HGNC" id="HGNC:18802">
    <property type="gene designation" value="ATPAF2"/>
</dbReference>
<dbReference type="HPA" id="ENSG00000171953">
    <property type="expression patterns" value="Low tissue specificity"/>
</dbReference>
<dbReference type="MalaCards" id="ATPAF2"/>
<dbReference type="MIM" id="604273">
    <property type="type" value="phenotype"/>
</dbReference>
<dbReference type="MIM" id="608918">
    <property type="type" value="gene"/>
</dbReference>
<dbReference type="neXtProt" id="NX_Q8N5M1"/>
<dbReference type="OpenTargets" id="ENSG00000171953"/>
<dbReference type="Orphanet" id="254913">
    <property type="disease" value="Isolated ATP synthase deficiency"/>
</dbReference>
<dbReference type="PharmGKB" id="PA38686"/>
<dbReference type="VEuPathDB" id="HostDB:ENSG00000171953"/>
<dbReference type="eggNOG" id="KOG3015">
    <property type="taxonomic scope" value="Eukaryota"/>
</dbReference>
<dbReference type="GeneTree" id="ENSGT00390000009492"/>
<dbReference type="HOGENOM" id="CLU_047893_2_0_1"/>
<dbReference type="InParanoid" id="Q8N5M1"/>
<dbReference type="OMA" id="WDPVLHW"/>
<dbReference type="OrthoDB" id="5673at2759"/>
<dbReference type="PAN-GO" id="Q8N5M1">
    <property type="GO annotations" value="2 GO annotations based on evolutionary models"/>
</dbReference>
<dbReference type="PhylomeDB" id="Q8N5M1"/>
<dbReference type="TreeFam" id="TF315138"/>
<dbReference type="BioCyc" id="MetaCyc:ENSG00000171953-MONOMER"/>
<dbReference type="PathwayCommons" id="Q8N5M1"/>
<dbReference type="SignaLink" id="Q8N5M1"/>
<dbReference type="BioGRID-ORCS" id="91647">
    <property type="hits" value="91 hits in 1163 CRISPR screens"/>
</dbReference>
<dbReference type="ChiTaRS" id="ATPAF2">
    <property type="organism name" value="human"/>
</dbReference>
<dbReference type="GeneWiki" id="ATPAF2"/>
<dbReference type="GenomeRNAi" id="91647"/>
<dbReference type="Pharos" id="Q8N5M1">
    <property type="development level" value="Tbio"/>
</dbReference>
<dbReference type="PRO" id="PR:Q8N5M1"/>
<dbReference type="Proteomes" id="UP000005640">
    <property type="component" value="Chromosome 17"/>
</dbReference>
<dbReference type="RNAct" id="Q8N5M1">
    <property type="molecule type" value="protein"/>
</dbReference>
<dbReference type="Bgee" id="ENSG00000171953">
    <property type="expression patterns" value="Expressed in right testis and 150 other cell types or tissues"/>
</dbReference>
<dbReference type="ExpressionAtlas" id="Q8N5M1">
    <property type="expression patterns" value="baseline and differential"/>
</dbReference>
<dbReference type="GO" id="GO:0005829">
    <property type="term" value="C:cytosol"/>
    <property type="evidence" value="ECO:0000314"/>
    <property type="project" value="HPA"/>
</dbReference>
<dbReference type="GO" id="GO:0005743">
    <property type="term" value="C:mitochondrial inner membrane"/>
    <property type="evidence" value="ECO:0000316"/>
    <property type="project" value="UniProtKB"/>
</dbReference>
<dbReference type="GO" id="GO:0005739">
    <property type="term" value="C:mitochondrion"/>
    <property type="evidence" value="ECO:0006056"/>
    <property type="project" value="FlyBase"/>
</dbReference>
<dbReference type="GO" id="GO:0016607">
    <property type="term" value="C:nuclear speck"/>
    <property type="evidence" value="ECO:0000314"/>
    <property type="project" value="LIFEdb"/>
</dbReference>
<dbReference type="GO" id="GO:0033615">
    <property type="term" value="P:mitochondrial proton-transporting ATP synthase complex assembly"/>
    <property type="evidence" value="ECO:0000316"/>
    <property type="project" value="UniProtKB"/>
</dbReference>
<dbReference type="GO" id="GO:0043461">
    <property type="term" value="P:proton-transporting ATP synthase complex assembly"/>
    <property type="evidence" value="ECO:0000303"/>
    <property type="project" value="UniProtKB"/>
</dbReference>
<dbReference type="FunFam" id="1.10.3580.10:FF:000001">
    <property type="entry name" value="ATP synthase mitochondrial F1 complex assembly factor 2"/>
    <property type="match status" value="1"/>
</dbReference>
<dbReference type="FunFam" id="3.30.2180.10:FF:000001">
    <property type="entry name" value="ATP synthase mitochondrial F1 complex assembly factor 2"/>
    <property type="match status" value="1"/>
</dbReference>
<dbReference type="Gene3D" id="1.10.3580.10">
    <property type="entry name" value="ATP12 ATPase"/>
    <property type="match status" value="1"/>
</dbReference>
<dbReference type="Gene3D" id="3.30.2180.10">
    <property type="entry name" value="ATP12-like"/>
    <property type="match status" value="1"/>
</dbReference>
<dbReference type="InterPro" id="IPR011419">
    <property type="entry name" value="ATP12_ATP_synth-F1-assembly"/>
</dbReference>
<dbReference type="InterPro" id="IPR042272">
    <property type="entry name" value="ATP12_ATP_synth-F1-assembly_N"/>
</dbReference>
<dbReference type="InterPro" id="IPR023335">
    <property type="entry name" value="ATP12_ortho_dom_sf"/>
</dbReference>
<dbReference type="PANTHER" id="PTHR21013:SF10">
    <property type="entry name" value="ATP SYNTHASE MITOCHONDRIAL F1 COMPLEX ASSEMBLY FACTOR 2"/>
    <property type="match status" value="1"/>
</dbReference>
<dbReference type="PANTHER" id="PTHR21013">
    <property type="entry name" value="ATP SYNTHASE MITOCHONDRIAL F1 COMPLEX ASSEMBLY FACTOR 2/ATP12 PROTEIN, MITOCHONDRIAL PRECURSOR"/>
    <property type="match status" value="1"/>
</dbReference>
<dbReference type="Pfam" id="PF07542">
    <property type="entry name" value="ATP12"/>
    <property type="match status" value="1"/>
</dbReference>
<dbReference type="SUPFAM" id="SSF160909">
    <property type="entry name" value="ATP12-like"/>
    <property type="match status" value="1"/>
</dbReference>
<evidence type="ECO:0000250" key="1">
    <source>
        <dbReference type="UniProtKB" id="Q91YY4"/>
    </source>
</evidence>
<evidence type="ECO:0000255" key="2"/>
<evidence type="ECO:0000256" key="3">
    <source>
        <dbReference type="SAM" id="MobiDB-lite"/>
    </source>
</evidence>
<evidence type="ECO:0000269" key="4">
    <source>
    </source>
</evidence>
<evidence type="ECO:0000269" key="5">
    <source>
    </source>
</evidence>
<evidence type="ECO:0000269" key="6">
    <source>
    </source>
</evidence>
<evidence type="ECO:0000303" key="7">
    <source>
    </source>
</evidence>
<evidence type="ECO:0000305" key="8"/>
<evidence type="ECO:0000305" key="9">
    <source>
    </source>
</evidence>
<evidence type="ECO:0000312" key="10">
    <source>
        <dbReference type="HGNC" id="HGNC:18802"/>
    </source>
</evidence>
<accession>Q8N5M1</accession>
<accession>A6NDE5</accession>
<accession>A8K2J2</accession>
<accession>Q6XYC7</accession>
<organism>
    <name type="scientific">Homo sapiens</name>
    <name type="common">Human</name>
    <dbReference type="NCBI Taxonomy" id="9606"/>
    <lineage>
        <taxon>Eukaryota</taxon>
        <taxon>Metazoa</taxon>
        <taxon>Chordata</taxon>
        <taxon>Craniata</taxon>
        <taxon>Vertebrata</taxon>
        <taxon>Euteleostomi</taxon>
        <taxon>Mammalia</taxon>
        <taxon>Eutheria</taxon>
        <taxon>Euarchontoglires</taxon>
        <taxon>Primates</taxon>
        <taxon>Haplorrhini</taxon>
        <taxon>Catarrhini</taxon>
        <taxon>Hominidae</taxon>
        <taxon>Homo</taxon>
    </lineage>
</organism>
<comment type="function">
    <text evidence="4">Plays a role in the assembly of the F1 component of the mitochondrial ATP synthase (ATPase).</text>
</comment>
<comment type="subunit">
    <text evidence="4 6">Interacts with ATP5F1B; involved in the assembly of the F1 component of the mitochondrial ATP synthase (ATPase) (PubMed:11410595). Interacts with FMC1 (PubMed:28719601).</text>
</comment>
<comment type="interaction">
    <interactant intactId="EBI-1166928">
        <id>Q8N5M1</id>
    </interactant>
    <interactant intactId="EBI-357530">
        <id>Q9ULX6</id>
        <label>AKAP8L</label>
    </interactant>
    <organismsDiffer>false</organismsDiffer>
    <experiments>3</experiments>
</comment>
<comment type="interaction">
    <interactant intactId="EBI-1166928">
        <id>Q8N5M1</id>
    </interactant>
    <interactant intactId="EBI-351437">
        <id>P25705</id>
        <label>ATP5F1A</label>
    </interactant>
    <organismsDiffer>false</organismsDiffer>
    <experiments>4</experiments>
</comment>
<comment type="interaction">
    <interactant intactId="EBI-1166928">
        <id>Q8N5M1</id>
    </interactant>
    <interactant intactId="EBI-356231">
        <id>P06576</id>
        <label>ATP5F1B</label>
    </interactant>
    <organismsDiffer>false</organismsDiffer>
    <experiments>8</experiments>
</comment>
<comment type="interaction">
    <interactant intactId="EBI-1166928">
        <id>Q8N5M1</id>
    </interactant>
    <interactant intactId="EBI-12702130">
        <id>A0A1B0GVM0</id>
        <label>BEGAIN</label>
    </interactant>
    <organismsDiffer>false</organismsDiffer>
    <experiments>3</experiments>
</comment>
<comment type="interaction">
    <interactant intactId="EBI-1166928">
        <id>Q8N5M1</id>
    </interactant>
    <interactant intactId="EBI-742722">
        <id>Q9BUH8</id>
        <label>BEGAIN</label>
    </interactant>
    <organismsDiffer>false</organismsDiffer>
    <experiments>5</experiments>
</comment>
<comment type="interaction">
    <interactant intactId="EBI-1166928">
        <id>Q8N5M1</id>
    </interactant>
    <interactant intactId="EBI-7851002">
        <id>Q9UNH5</id>
        <label>CDC14A</label>
    </interactant>
    <organismsDiffer>false</organismsDiffer>
    <experiments>3</experiments>
</comment>
<comment type="interaction">
    <interactant intactId="EBI-1166928">
        <id>Q8N5M1</id>
    </interactant>
    <interactant intactId="EBI-1052532">
        <id>O14519</id>
        <label>CDK2AP1</label>
    </interactant>
    <organismsDiffer>false</organismsDiffer>
    <experiments>3</experiments>
</comment>
<comment type="interaction">
    <interactant intactId="EBI-1166928">
        <id>Q8N5M1</id>
    </interactant>
    <interactant intactId="EBI-11752486">
        <id>Q86XR8-3</id>
        <label>CEP57</label>
    </interactant>
    <organismsDiffer>false</organismsDiffer>
    <experiments>3</experiments>
</comment>
<comment type="interaction">
    <interactant intactId="EBI-1166928">
        <id>Q8N5M1</id>
    </interactant>
    <interactant intactId="EBI-749051">
        <id>Q8IYR0</id>
        <label>CFAP206</label>
    </interactant>
    <organismsDiffer>false</organismsDiffer>
    <experiments>3</experiments>
</comment>
<comment type="interaction">
    <interactant intactId="EBI-1166928">
        <id>Q8N5M1</id>
    </interactant>
    <interactant intactId="EBI-718615">
        <id>Q9H5F2</id>
        <label>CFAP68</label>
    </interactant>
    <organismsDiffer>false</organismsDiffer>
    <experiments>3</experiments>
</comment>
<comment type="interaction">
    <interactant intactId="EBI-1166928">
        <id>Q8N5M1</id>
    </interactant>
    <interactant intactId="EBI-12160437">
        <id>A8MTA8-2</id>
        <label>CIMIP2B</label>
    </interactant>
    <organismsDiffer>false</organismsDiffer>
    <experiments>3</experiments>
</comment>
<comment type="interaction">
    <interactant intactId="EBI-1166928">
        <id>Q8N5M1</id>
    </interactant>
    <interactant intactId="EBI-1181987">
        <id>Q53ET0</id>
        <label>CRTC2</label>
    </interactant>
    <organismsDiffer>false</organismsDiffer>
    <experiments>3</experiments>
</comment>
<comment type="interaction">
    <interactant intactId="EBI-1166928">
        <id>Q8N5M1</id>
    </interactant>
    <interactant intactId="EBI-12180013">
        <id>O43310-2</id>
        <label>CTIF</label>
    </interactant>
    <organismsDiffer>false</organismsDiffer>
    <experiments>3</experiments>
</comment>
<comment type="interaction">
    <interactant intactId="EBI-1166928">
        <id>Q8N5M1</id>
    </interactant>
    <interactant intactId="EBI-3867333">
        <id>A8MQ03</id>
        <label>CYSRT1</label>
    </interactant>
    <organismsDiffer>false</organismsDiffer>
    <experiments>3</experiments>
</comment>
<comment type="interaction">
    <interactant intactId="EBI-1166928">
        <id>Q8N5M1</id>
    </interactant>
    <interactant intactId="EBI-10173632">
        <id>P35638-2</id>
        <label>DDIT3</label>
    </interactant>
    <organismsDiffer>false</organismsDiffer>
    <experiments>3</experiments>
</comment>
<comment type="interaction">
    <interactant intactId="EBI-1166928">
        <id>Q8N5M1</id>
    </interactant>
    <interactant intactId="EBI-12000556">
        <id>Q9Y2H0-1</id>
        <label>DLGAP4</label>
    </interactant>
    <organismsDiffer>false</organismsDiffer>
    <experiments>3</experiments>
</comment>
<comment type="interaction">
    <interactant intactId="EBI-1166928">
        <id>Q8N5M1</id>
    </interactant>
    <interactant intactId="EBI-765426">
        <id>Q9UH73</id>
        <label>EBF1</label>
    </interactant>
    <organismsDiffer>false</organismsDiffer>
    <experiments>10</experiments>
</comment>
<comment type="interaction">
    <interactant intactId="EBI-1166928">
        <id>Q8N5M1</id>
    </interactant>
    <interactant intactId="EBI-17233744">
        <id>Q9H4W6-2</id>
        <label>EBF3</label>
    </interactant>
    <organismsDiffer>false</organismsDiffer>
    <experiments>3</experiments>
</comment>
<comment type="interaction">
    <interactant intactId="EBI-1166928">
        <id>Q8N5M1</id>
    </interactant>
    <interactant intactId="EBI-12012124">
        <id>Q04637-9</id>
        <label>EIF4G1</label>
    </interactant>
    <organismsDiffer>false</organismsDiffer>
    <experiments>3</experiments>
</comment>
<comment type="interaction">
    <interactant intactId="EBI-1166928">
        <id>Q8N5M1</id>
    </interactant>
    <interactant intactId="EBI-739737">
        <id>Q01844</id>
        <label>EWSR1</label>
    </interactant>
    <organismsDiffer>false</organismsDiffer>
    <experiments>7</experiments>
</comment>
<comment type="interaction">
    <interactant intactId="EBI-1166928">
        <id>Q8N5M1</id>
    </interactant>
    <interactant intactId="EBI-11958845">
        <id>O94868-3</id>
        <label>FCHSD2</label>
    </interactant>
    <organismsDiffer>false</organismsDiffer>
    <experiments>3</experiments>
</comment>
<comment type="interaction">
    <interactant intactId="EBI-1166928">
        <id>Q8N5M1</id>
    </interactant>
    <interactant intactId="EBI-602349">
        <id>P49356</id>
        <label>FNTB</label>
    </interactant>
    <organismsDiffer>false</organismsDiffer>
    <experiments>3</experiments>
</comment>
<comment type="interaction">
    <interactant intactId="EBI-1166928">
        <id>Q8N5M1</id>
    </interactant>
    <interactant intactId="EBI-1059030">
        <id>O95073</id>
        <label>FSBP</label>
    </interactant>
    <organismsDiffer>false</organismsDiffer>
    <experiments>3</experiments>
</comment>
<comment type="interaction">
    <interactant intactId="EBI-1166928">
        <id>Q8N5M1</id>
    </interactant>
    <interactant intactId="EBI-10696047">
        <id>O95073-2</id>
        <label>FSBP</label>
    </interactant>
    <organismsDiffer>false</organismsDiffer>
    <experiments>3</experiments>
</comment>
<comment type="interaction">
    <interactant intactId="EBI-1166928">
        <id>Q8N5M1</id>
    </interactant>
    <interactant intactId="EBI-5916454">
        <id>A6NEM1</id>
        <label>GOLGA6L9</label>
    </interactant>
    <organismsDiffer>false</organismsDiffer>
    <experiments>3</experiments>
</comment>
<comment type="interaction">
    <interactant intactId="EBI-1166928">
        <id>Q8N5M1</id>
    </interactant>
    <interactant intactId="EBI-10266742">
        <id>V9HW31</id>
        <label>HEL-S-271</label>
    </interactant>
    <organismsDiffer>false</organismsDiffer>
    <experiments>3</experiments>
</comment>
<comment type="interaction">
    <interactant intactId="EBI-1166928">
        <id>Q8N5M1</id>
    </interactant>
    <interactant intactId="EBI-747204">
        <id>Q9UKT9</id>
        <label>IKZF3</label>
    </interactant>
    <organismsDiffer>false</organismsDiffer>
    <experiments>10</experiments>
</comment>
<comment type="interaction">
    <interactant intactId="EBI-1166928">
        <id>Q8N5M1</id>
    </interactant>
    <interactant intactId="EBI-6509505">
        <id>Q0VD86</id>
        <label>INCA1</label>
    </interactant>
    <organismsDiffer>false</organismsDiffer>
    <experiments>3</experiments>
</comment>
<comment type="interaction">
    <interactant intactId="EBI-1166928">
        <id>Q8N5M1</id>
    </interactant>
    <interactant intactId="EBI-1047093">
        <id>O76011</id>
        <label>KRT34</label>
    </interactant>
    <organismsDiffer>false</organismsDiffer>
    <experiments>3</experiments>
</comment>
<comment type="interaction">
    <interactant intactId="EBI-1166928">
        <id>Q8N5M1</id>
    </interactant>
    <interactant intactId="EBI-10171697">
        <id>Q6A162</id>
        <label>KRT40</label>
    </interactant>
    <organismsDiffer>false</organismsDiffer>
    <experiments>7</experiments>
</comment>
<comment type="interaction">
    <interactant intactId="EBI-1166928">
        <id>Q8N5M1</id>
    </interactant>
    <interactant intactId="EBI-1048945">
        <id>Q3LI72</id>
        <label>KRTAP19-5</label>
    </interactant>
    <organismsDiffer>false</organismsDiffer>
    <experiments>3</experiments>
</comment>
<comment type="interaction">
    <interactant intactId="EBI-1166928">
        <id>Q8N5M1</id>
    </interactant>
    <interactant intactId="EBI-12805508">
        <id>Q3LI70</id>
        <label>KRTAP19-6</label>
    </interactant>
    <organismsDiffer>false</organismsDiffer>
    <experiments>3</experiments>
</comment>
<comment type="interaction">
    <interactant intactId="EBI-1166928">
        <id>Q8N5M1</id>
    </interactant>
    <interactant intactId="EBI-10241353">
        <id>Q3SYF9</id>
        <label>KRTAP19-7</label>
    </interactant>
    <organismsDiffer>false</organismsDiffer>
    <experiments>3</experiments>
</comment>
<comment type="interaction">
    <interactant intactId="EBI-1166928">
        <id>Q8N5M1</id>
    </interactant>
    <interactant intactId="EBI-11962084">
        <id>Q3LI66</id>
        <label>KRTAP6-2</label>
    </interactant>
    <organismsDiffer>false</organismsDiffer>
    <experiments>3</experiments>
</comment>
<comment type="interaction">
    <interactant intactId="EBI-1166928">
        <id>Q8N5M1</id>
    </interactant>
    <interactant intactId="EBI-22311199">
        <id>Q3LI67</id>
        <label>KRTAP6-3</label>
    </interactant>
    <organismsDiffer>false</organismsDiffer>
    <experiments>3</experiments>
</comment>
<comment type="interaction">
    <interactant intactId="EBI-1166928">
        <id>Q8N5M1</id>
    </interactant>
    <interactant intactId="EBI-10240775">
        <id>Q3B8N2</id>
        <label>LGALS9B</label>
    </interactant>
    <organismsDiffer>false</organismsDiffer>
    <experiments>3</experiments>
</comment>
<comment type="interaction">
    <interactant intactId="EBI-1166928">
        <id>Q8N5M1</id>
    </interactant>
    <interactant intactId="EBI-739832">
        <id>Q8TBB1</id>
        <label>LNX1</label>
    </interactant>
    <organismsDiffer>false</organismsDiffer>
    <experiments>11</experiments>
</comment>
<comment type="interaction">
    <interactant intactId="EBI-1166928">
        <id>Q8N5M1</id>
    </interactant>
    <interactant intactId="EBI-1023718">
        <id>Q9Y608</id>
        <label>LRRFIP2</label>
    </interactant>
    <organismsDiffer>false</organismsDiffer>
    <experiments>4</experiments>
</comment>
<comment type="interaction">
    <interactant intactId="EBI-1166928">
        <id>Q8N5M1</id>
    </interactant>
    <interactant intactId="EBI-12696250">
        <id>Q9Y608-2</id>
        <label>LRRFIP2</label>
    </interactant>
    <organismsDiffer>false</organismsDiffer>
    <experiments>3</experiments>
</comment>
<comment type="interaction">
    <interactant intactId="EBI-1166928">
        <id>Q8N5M1</id>
    </interactant>
    <interactant intactId="EBI-12898559">
        <id>Q8IV03</id>
        <label>LURAP1L</label>
    </interactant>
    <organismsDiffer>false</organismsDiffer>
    <experiments>3</experiments>
</comment>
<comment type="interaction">
    <interactant intactId="EBI-1166928">
        <id>Q8N5M1</id>
    </interactant>
    <interactant intactId="EBI-741037">
        <id>Q9BRK4</id>
        <label>LZTS2</label>
    </interactant>
    <organismsDiffer>false</organismsDiffer>
    <experiments>6</experiments>
</comment>
<comment type="interaction">
    <interactant intactId="EBI-1166928">
        <id>Q8N5M1</id>
    </interactant>
    <interactant intactId="EBI-1045155">
        <id>P43360</id>
        <label>MAGEA6</label>
    </interactant>
    <organismsDiffer>false</organismsDiffer>
    <experiments>9</experiments>
</comment>
<comment type="interaction">
    <interactant intactId="EBI-1166928">
        <id>Q8N5M1</id>
    </interactant>
    <interactant intactId="EBI-1050881">
        <id>Q5VYS4</id>
        <label>MEDAG</label>
    </interactant>
    <organismsDiffer>false</organismsDiffer>
    <experiments>3</experiments>
</comment>
<comment type="interaction">
    <interactant intactId="EBI-1166928">
        <id>Q8N5M1</id>
    </interactant>
    <interactant intactId="EBI-9118295">
        <id>A9UHW6-2</id>
        <label>MIF4GD</label>
    </interactant>
    <organismsDiffer>false</organismsDiffer>
    <experiments>3</experiments>
</comment>
<comment type="interaction">
    <interactant intactId="EBI-1166928">
        <id>Q8N5M1</id>
    </interactant>
    <interactant intactId="EBI-744871">
        <id>O00746</id>
        <label>NME4</label>
    </interactant>
    <organismsDiffer>false</organismsDiffer>
    <experiments>3</experiments>
</comment>
<comment type="interaction">
    <interactant intactId="EBI-1166928">
        <id>Q8N5M1</id>
    </interactant>
    <interactant intactId="EBI-741896">
        <id>Q9P286</id>
        <label>PAK5</label>
    </interactant>
    <organismsDiffer>false</organismsDiffer>
    <experiments>7</experiments>
</comment>
<comment type="interaction">
    <interactant intactId="EBI-1166928">
        <id>Q8N5M1</id>
    </interactant>
    <interactant intactId="EBI-726447">
        <id>Q99569</id>
        <label>PKP4</label>
    </interactant>
    <organismsDiffer>false</organismsDiffer>
    <experiments>4</experiments>
</comment>
<comment type="interaction">
    <interactant intactId="EBI-1166928">
        <id>Q8N5M1</id>
    </interactant>
    <interactant intactId="EBI-4324902">
        <id>Q99569-2</id>
        <label>PKP4</label>
    </interactant>
    <organismsDiffer>false</organismsDiffer>
    <experiments>3</experiments>
</comment>
<comment type="interaction">
    <interactant intactId="EBI-1166928">
        <id>Q8N5M1</id>
    </interactant>
    <interactant intactId="EBI-12818681">
        <id>Q9H1A7</id>
        <label>POLR2J3</label>
    </interactant>
    <organismsDiffer>false</organismsDiffer>
    <experiments>3</experiments>
</comment>
<comment type="interaction">
    <interactant intactId="EBI-1166928">
        <id>Q8N5M1</id>
    </interactant>
    <interactant intactId="EBI-710067">
        <id>Q9H1D9</id>
        <label>POLR3F</label>
    </interactant>
    <organismsDiffer>false</organismsDiffer>
    <experiments>3</experiments>
</comment>
<comment type="interaction">
    <interactant intactId="EBI-1166928">
        <id>Q8N5M1</id>
    </interactant>
    <interactant intactId="EBI-2515065">
        <id>Q9Y535</id>
        <label>POLR3H</label>
    </interactant>
    <organismsDiffer>false</organismsDiffer>
    <experiments>3</experiments>
</comment>
<comment type="interaction">
    <interactant intactId="EBI-1166928">
        <id>Q8N5M1</id>
    </interactant>
    <interactant intactId="EBI-10293968">
        <id>Q96T49</id>
        <label>PPP1R16B</label>
    </interactant>
    <organismsDiffer>false</organismsDiffer>
    <experiments>3</experiments>
</comment>
<comment type="interaction">
    <interactant intactId="EBI-1166928">
        <id>Q8N5M1</id>
    </interactant>
    <interactant intactId="EBI-3957793">
        <id>Q9GZV8</id>
        <label>PRDM14</label>
    </interactant>
    <organismsDiffer>false</organismsDiffer>
    <experiments>10</experiments>
</comment>
<comment type="interaction">
    <interactant intactId="EBI-1166928">
        <id>Q8N5M1</id>
    </interactant>
    <interactant intactId="EBI-11320284">
        <id>Q9NQX0</id>
        <label>PRDM6</label>
    </interactant>
    <organismsDiffer>false</organismsDiffer>
    <experiments>3</experiments>
</comment>
<comment type="interaction">
    <interactant intactId="EBI-1166928">
        <id>Q8N5M1</id>
    </interactant>
    <interactant intactId="EBI-473821">
        <id>Q5RL73</id>
        <label>RBM48</label>
    </interactant>
    <organismsDiffer>false</organismsDiffer>
    <experiments>3</experiments>
</comment>
<comment type="interaction">
    <interactant intactId="EBI-1166928">
        <id>Q8N5M1</id>
    </interactant>
    <interactant intactId="EBI-948278">
        <id>Q15293</id>
        <label>RCN1</label>
    </interactant>
    <organismsDiffer>false</organismsDiffer>
    <experiments>3</experiments>
</comment>
<comment type="interaction">
    <interactant intactId="EBI-1166928">
        <id>Q8N5M1</id>
    </interactant>
    <interactant intactId="EBI-307352">
        <id>Q04864</id>
        <label>REL</label>
    </interactant>
    <organismsDiffer>false</organismsDiffer>
    <experiments>3</experiments>
</comment>
<comment type="interaction">
    <interactant intactId="EBI-1166928">
        <id>Q8N5M1</id>
    </interactant>
    <interactant intactId="EBI-10829018">
        <id>Q04864-2</id>
        <label>REL</label>
    </interactant>
    <organismsDiffer>false</organismsDiffer>
    <experiments>3</experiments>
</comment>
<comment type="interaction">
    <interactant intactId="EBI-1166928">
        <id>Q8N5M1</id>
    </interactant>
    <interactant intactId="EBI-2855824">
        <id>Q9UNE2</id>
        <label>RPH3AL</label>
    </interactant>
    <organismsDiffer>false</organismsDiffer>
    <experiments>3</experiments>
</comment>
<comment type="interaction">
    <interactant intactId="EBI-1166928">
        <id>Q8N5M1</id>
    </interactant>
    <interactant intactId="EBI-744831">
        <id>P49247</id>
        <label>RPIA</label>
    </interactant>
    <organismsDiffer>false</organismsDiffer>
    <experiments>12</experiments>
</comment>
<comment type="interaction">
    <interactant intactId="EBI-1166928">
        <id>Q8N5M1</id>
    </interactant>
    <interactant intactId="EBI-12000762">
        <id>Q7Z5V6-2</id>
        <label>SAXO4</label>
    </interactant>
    <organismsDiffer>false</organismsDiffer>
    <experiments>5</experiments>
</comment>
<comment type="interaction">
    <interactant intactId="EBI-1166928">
        <id>Q8N5M1</id>
    </interactant>
    <interactant intactId="EBI-311323">
        <id>O94875</id>
        <label>SORBS2</label>
    </interactant>
    <organismsDiffer>false</organismsDiffer>
    <experiments>3</experiments>
</comment>
<comment type="interaction">
    <interactant intactId="EBI-1166928">
        <id>Q8N5M1</id>
    </interactant>
    <interactant intactId="EBI-12037893">
        <id>O94875-10</id>
        <label>SORBS2</label>
    </interactant>
    <organismsDiffer>false</organismsDiffer>
    <experiments>3</experiments>
</comment>
<comment type="interaction">
    <interactant intactId="EBI-1166928">
        <id>Q8N5M1</id>
    </interactant>
    <interactant intactId="EBI-11995806">
        <id>Q9H0A9-2</id>
        <label>SPATC1L</label>
    </interactant>
    <organismsDiffer>false</organismsDiffer>
    <experiments>3</experiments>
</comment>
<comment type="interaction">
    <interactant intactId="EBI-1166928">
        <id>Q8N5M1</id>
    </interactant>
    <interactant intactId="EBI-742688">
        <id>Q9NZD8</id>
        <label>SPG21</label>
    </interactant>
    <organismsDiffer>false</organismsDiffer>
    <experiments>20</experiments>
</comment>
<comment type="interaction">
    <interactant intactId="EBI-1166928">
        <id>Q8N5M1</id>
    </interactant>
    <interactant intactId="EBI-740781">
        <id>Q9BT92</id>
        <label>TCHP</label>
    </interactant>
    <organismsDiffer>false</organismsDiffer>
    <experiments>3</experiments>
</comment>
<comment type="interaction">
    <interactant intactId="EBI-1166928">
        <id>Q8N5M1</id>
    </interactant>
    <interactant intactId="EBI-1105213">
        <id>Q9UBB9</id>
        <label>TFIP11</label>
    </interactant>
    <organismsDiffer>false</organismsDiffer>
    <experiments>3</experiments>
</comment>
<comment type="interaction">
    <interactant intactId="EBI-1166928">
        <id>Q8N5M1</id>
    </interactant>
    <interactant intactId="EBI-10175039">
        <id>Q13625-3</id>
        <label>TP53BP2</label>
    </interactant>
    <organismsDiffer>false</organismsDiffer>
    <experiments>3</experiments>
</comment>
<comment type="interaction">
    <interactant intactId="EBI-1166928">
        <id>Q8N5M1</id>
    </interactant>
    <interactant intactId="EBI-740098">
        <id>P36406</id>
        <label>TRIM23</label>
    </interactant>
    <organismsDiffer>false</organismsDiffer>
    <experiments>7</experiments>
</comment>
<comment type="interaction">
    <interactant intactId="EBI-1166928">
        <id>Q8N5M1</id>
    </interactant>
    <interactant intactId="EBI-719493">
        <id>P14373</id>
        <label>TRIM27</label>
    </interactant>
    <organismsDiffer>false</organismsDiffer>
    <experiments>6</experiments>
</comment>
<comment type="interaction">
    <interactant intactId="EBI-1166928">
        <id>Q8N5M1</id>
    </interactant>
    <interactant intactId="EBI-2514383">
        <id>Q5T6F2</id>
        <label>UBAP2</label>
    </interactant>
    <organismsDiffer>false</organismsDiffer>
    <experiments>3</experiments>
</comment>
<comment type="interaction">
    <interactant intactId="EBI-1166928">
        <id>Q8N5M1</id>
    </interactant>
    <interactant intactId="EBI-11957238">
        <id>Q2TAL6</id>
        <label>VWC2</label>
    </interactant>
    <organismsDiffer>false</organismsDiffer>
    <experiments>3</experiments>
</comment>
<comment type="interaction">
    <interactant intactId="EBI-1166928">
        <id>Q8N5M1</id>
    </interactant>
    <interactant intactId="EBI-11419867">
        <id>Q8TF47</id>
        <label>ZFP90</label>
    </interactant>
    <organismsDiffer>false</organismsDiffer>
    <experiments>3</experiments>
</comment>
<comment type="interaction">
    <interactant intactId="EBI-1166928">
        <id>Q8N5M1</id>
    </interactant>
    <interactant intactId="EBI-12884200">
        <id>P17023</id>
        <label>ZNF19</label>
    </interactant>
    <organismsDiffer>false</organismsDiffer>
    <experiments>3</experiments>
</comment>
<comment type="interaction">
    <interactant intactId="EBI-1166928">
        <id>Q8N5M1</id>
    </interactant>
    <interactant intactId="EBI-5657766">
        <id>P17027</id>
        <label>ZNF23</label>
    </interactant>
    <organismsDiffer>false</organismsDiffer>
    <experiments>3</experiments>
</comment>
<comment type="interaction">
    <interactant intactId="EBI-1166928">
        <id>Q8N5M1</id>
    </interactant>
    <interactant intactId="EBI-11041653">
        <id>P13682</id>
        <label>ZNF35</label>
    </interactant>
    <organismsDiffer>false</organismsDiffer>
    <experiments>3</experiments>
</comment>
<comment type="interaction">
    <interactant intactId="EBI-1166928">
        <id>Q8N5M1</id>
    </interactant>
    <interactant intactId="EBI-743265">
        <id>Q9BUY5</id>
        <label>ZNF426</label>
    </interactant>
    <organismsDiffer>false</organismsDiffer>
    <experiments>3</experiments>
</comment>
<comment type="interaction">
    <interactant intactId="EBI-1166928">
        <id>Q8N5M1</id>
    </interactant>
    <interactant intactId="EBI-625509">
        <id>Q8N720</id>
        <label>ZNF655</label>
    </interactant>
    <organismsDiffer>false</organismsDiffer>
    <experiments>3</experiments>
</comment>
<comment type="subcellular location">
    <subcellularLocation>
        <location evidence="4">Mitochondrion inner membrane</location>
        <topology evidence="9">Peripheral membrane protein</topology>
    </subcellularLocation>
</comment>
<comment type="tissue specificity">
    <text evidence="4">Widely expressed.</text>
</comment>
<comment type="disease" evidence="5">
    <disease id="DI-01381">
        <name>Mitochondrial complex V deficiency, nuclear type 1</name>
        <acronym>MC5DN1</acronym>
        <description>A mitochondrial disorder with heterogeneous clinical manifestations including dysmorphic features, psychomotor retardation, hypotonia, growth retardation, cardiomyopathy, enlarged liver, hypoplastic kidneys and elevated lactate levels in urine, plasma and cerebrospinal fluid.</description>
        <dbReference type="MIM" id="604273"/>
    </disease>
    <text>The disease is caused by variants affecting the gene represented in this entry.</text>
</comment>
<comment type="similarity">
    <text evidence="8">Belongs to the ATP12 family.</text>
</comment>
<comment type="sequence caution" evidence="8">
    <conflict type="frameshift">
        <sequence resource="EMBL-CDS" id="AAP34466"/>
    </conflict>
</comment>
<name>ATPF2_HUMAN</name>
<protein>
    <recommendedName>
        <fullName evidence="9">ATP synthase mitochondrial F1 complex assembly factor 2</fullName>
    </recommendedName>
    <alternativeName>
        <fullName evidence="9">ATP12 homolog</fullName>
    </alternativeName>
</protein>
<proteinExistence type="evidence at protein level"/>
<reference key="1">
    <citation type="journal article" date="2004" name="Proc. Natl. Acad. Sci. U.S.A.">
        <title>Large-scale cDNA transfection screening for genes related to cancer development and progression.</title>
        <authorList>
            <person name="Wan D."/>
            <person name="Gong Y."/>
            <person name="Qin W."/>
            <person name="Zhang P."/>
            <person name="Li J."/>
            <person name="Wei L."/>
            <person name="Zhou X."/>
            <person name="Li H."/>
            <person name="Qiu X."/>
            <person name="Zhong F."/>
            <person name="He L."/>
            <person name="Yu J."/>
            <person name="Yao G."/>
            <person name="Jiang H."/>
            <person name="Qian L."/>
            <person name="Yu Y."/>
            <person name="Shu H."/>
            <person name="Chen X."/>
            <person name="Xu H."/>
            <person name="Guo M."/>
            <person name="Pan Z."/>
            <person name="Chen Y."/>
            <person name="Ge C."/>
            <person name="Yang S."/>
            <person name="Gu J."/>
        </authorList>
    </citation>
    <scope>NUCLEOTIDE SEQUENCE [LARGE SCALE MRNA]</scope>
</reference>
<reference key="2">
    <citation type="journal article" date="2004" name="Nat. Genet.">
        <title>Complete sequencing and characterization of 21,243 full-length human cDNAs.</title>
        <authorList>
            <person name="Ota T."/>
            <person name="Suzuki Y."/>
            <person name="Nishikawa T."/>
            <person name="Otsuki T."/>
            <person name="Sugiyama T."/>
            <person name="Irie R."/>
            <person name="Wakamatsu A."/>
            <person name="Hayashi K."/>
            <person name="Sato H."/>
            <person name="Nagai K."/>
            <person name="Kimura K."/>
            <person name="Makita H."/>
            <person name="Sekine M."/>
            <person name="Obayashi M."/>
            <person name="Nishi T."/>
            <person name="Shibahara T."/>
            <person name="Tanaka T."/>
            <person name="Ishii S."/>
            <person name="Yamamoto J."/>
            <person name="Saito K."/>
            <person name="Kawai Y."/>
            <person name="Isono Y."/>
            <person name="Nakamura Y."/>
            <person name="Nagahari K."/>
            <person name="Murakami K."/>
            <person name="Yasuda T."/>
            <person name="Iwayanagi T."/>
            <person name="Wagatsuma M."/>
            <person name="Shiratori A."/>
            <person name="Sudo H."/>
            <person name="Hosoiri T."/>
            <person name="Kaku Y."/>
            <person name="Kodaira H."/>
            <person name="Kondo H."/>
            <person name="Sugawara M."/>
            <person name="Takahashi M."/>
            <person name="Kanda K."/>
            <person name="Yokoi T."/>
            <person name="Furuya T."/>
            <person name="Kikkawa E."/>
            <person name="Omura Y."/>
            <person name="Abe K."/>
            <person name="Kamihara K."/>
            <person name="Katsuta N."/>
            <person name="Sato K."/>
            <person name="Tanikawa M."/>
            <person name="Yamazaki M."/>
            <person name="Ninomiya K."/>
            <person name="Ishibashi T."/>
            <person name="Yamashita H."/>
            <person name="Murakawa K."/>
            <person name="Fujimori K."/>
            <person name="Tanai H."/>
            <person name="Kimata M."/>
            <person name="Watanabe M."/>
            <person name="Hiraoka S."/>
            <person name="Chiba Y."/>
            <person name="Ishida S."/>
            <person name="Ono Y."/>
            <person name="Takiguchi S."/>
            <person name="Watanabe S."/>
            <person name="Yosida M."/>
            <person name="Hotuta T."/>
            <person name="Kusano J."/>
            <person name="Kanehori K."/>
            <person name="Takahashi-Fujii A."/>
            <person name="Hara H."/>
            <person name="Tanase T.-O."/>
            <person name="Nomura Y."/>
            <person name="Togiya S."/>
            <person name="Komai F."/>
            <person name="Hara R."/>
            <person name="Takeuchi K."/>
            <person name="Arita M."/>
            <person name="Imose N."/>
            <person name="Musashino K."/>
            <person name="Yuuki H."/>
            <person name="Oshima A."/>
            <person name="Sasaki N."/>
            <person name="Aotsuka S."/>
            <person name="Yoshikawa Y."/>
            <person name="Matsunawa H."/>
            <person name="Ichihara T."/>
            <person name="Shiohata N."/>
            <person name="Sano S."/>
            <person name="Moriya S."/>
            <person name="Momiyama H."/>
            <person name="Satoh N."/>
            <person name="Takami S."/>
            <person name="Terashima Y."/>
            <person name="Suzuki O."/>
            <person name="Nakagawa S."/>
            <person name="Senoh A."/>
            <person name="Mizoguchi H."/>
            <person name="Goto Y."/>
            <person name="Shimizu F."/>
            <person name="Wakebe H."/>
            <person name="Hishigaki H."/>
            <person name="Watanabe T."/>
            <person name="Sugiyama A."/>
            <person name="Takemoto M."/>
            <person name="Kawakami B."/>
            <person name="Yamazaki M."/>
            <person name="Watanabe K."/>
            <person name="Kumagai A."/>
            <person name="Itakura S."/>
            <person name="Fukuzumi Y."/>
            <person name="Fujimori Y."/>
            <person name="Komiyama M."/>
            <person name="Tashiro H."/>
            <person name="Tanigami A."/>
            <person name="Fujiwara T."/>
            <person name="Ono T."/>
            <person name="Yamada K."/>
            <person name="Fujii Y."/>
            <person name="Ozaki K."/>
            <person name="Hirao M."/>
            <person name="Ohmori Y."/>
            <person name="Kawabata A."/>
            <person name="Hikiji T."/>
            <person name="Kobatake N."/>
            <person name="Inagaki H."/>
            <person name="Ikema Y."/>
            <person name="Okamoto S."/>
            <person name="Okitani R."/>
            <person name="Kawakami T."/>
            <person name="Noguchi S."/>
            <person name="Itoh T."/>
            <person name="Shigeta K."/>
            <person name="Senba T."/>
            <person name="Matsumura K."/>
            <person name="Nakajima Y."/>
            <person name="Mizuno T."/>
            <person name="Morinaga M."/>
            <person name="Sasaki M."/>
            <person name="Togashi T."/>
            <person name="Oyama M."/>
            <person name="Hata H."/>
            <person name="Watanabe M."/>
            <person name="Komatsu T."/>
            <person name="Mizushima-Sugano J."/>
            <person name="Satoh T."/>
            <person name="Shirai Y."/>
            <person name="Takahashi Y."/>
            <person name="Nakagawa K."/>
            <person name="Okumura K."/>
            <person name="Nagase T."/>
            <person name="Nomura N."/>
            <person name="Kikuchi H."/>
            <person name="Masuho Y."/>
            <person name="Yamashita R."/>
            <person name="Nakai K."/>
            <person name="Yada T."/>
            <person name="Nakamura Y."/>
            <person name="Ohara O."/>
            <person name="Isogai T."/>
            <person name="Sugano S."/>
        </authorList>
    </citation>
    <scope>NUCLEOTIDE SEQUENCE [LARGE SCALE MRNA]</scope>
</reference>
<reference key="3">
    <citation type="journal article" date="2006" name="Nature">
        <title>DNA sequence of human chromosome 17 and analysis of rearrangement in the human lineage.</title>
        <authorList>
            <person name="Zody M.C."/>
            <person name="Garber M."/>
            <person name="Adams D.J."/>
            <person name="Sharpe T."/>
            <person name="Harrow J."/>
            <person name="Lupski J.R."/>
            <person name="Nicholson C."/>
            <person name="Searle S.M."/>
            <person name="Wilming L."/>
            <person name="Young S.K."/>
            <person name="Abouelleil A."/>
            <person name="Allen N.R."/>
            <person name="Bi W."/>
            <person name="Bloom T."/>
            <person name="Borowsky M.L."/>
            <person name="Bugalter B.E."/>
            <person name="Butler J."/>
            <person name="Chang J.L."/>
            <person name="Chen C.-K."/>
            <person name="Cook A."/>
            <person name="Corum B."/>
            <person name="Cuomo C.A."/>
            <person name="de Jong P.J."/>
            <person name="DeCaprio D."/>
            <person name="Dewar K."/>
            <person name="FitzGerald M."/>
            <person name="Gilbert J."/>
            <person name="Gibson R."/>
            <person name="Gnerre S."/>
            <person name="Goldstein S."/>
            <person name="Grafham D.V."/>
            <person name="Grocock R."/>
            <person name="Hafez N."/>
            <person name="Hagopian D.S."/>
            <person name="Hart E."/>
            <person name="Norman C.H."/>
            <person name="Humphray S."/>
            <person name="Jaffe D.B."/>
            <person name="Jones M."/>
            <person name="Kamal M."/>
            <person name="Khodiyar V.K."/>
            <person name="LaButti K."/>
            <person name="Laird G."/>
            <person name="Lehoczky J."/>
            <person name="Liu X."/>
            <person name="Lokyitsang T."/>
            <person name="Loveland J."/>
            <person name="Lui A."/>
            <person name="Macdonald P."/>
            <person name="Major J.E."/>
            <person name="Matthews L."/>
            <person name="Mauceli E."/>
            <person name="McCarroll S.A."/>
            <person name="Mihalev A.H."/>
            <person name="Mudge J."/>
            <person name="Nguyen C."/>
            <person name="Nicol R."/>
            <person name="O'Leary S.B."/>
            <person name="Osoegawa K."/>
            <person name="Schwartz D.C."/>
            <person name="Shaw-Smith C."/>
            <person name="Stankiewicz P."/>
            <person name="Steward C."/>
            <person name="Swarbreck D."/>
            <person name="Venkataraman V."/>
            <person name="Whittaker C.A."/>
            <person name="Yang X."/>
            <person name="Zimmer A.R."/>
            <person name="Bradley A."/>
            <person name="Hubbard T."/>
            <person name="Birren B.W."/>
            <person name="Rogers J."/>
            <person name="Lander E.S."/>
            <person name="Nusbaum C."/>
        </authorList>
    </citation>
    <scope>NUCLEOTIDE SEQUENCE [LARGE SCALE GENOMIC DNA]</scope>
</reference>
<reference key="4">
    <citation type="submission" date="2005-09" db="EMBL/GenBank/DDBJ databases">
        <authorList>
            <person name="Mural R.J."/>
            <person name="Istrail S."/>
            <person name="Sutton G.G."/>
            <person name="Florea L."/>
            <person name="Halpern A.L."/>
            <person name="Mobarry C.M."/>
            <person name="Lippert R."/>
            <person name="Walenz B."/>
            <person name="Shatkay H."/>
            <person name="Dew I."/>
            <person name="Miller J.R."/>
            <person name="Flanigan M.J."/>
            <person name="Edwards N.J."/>
            <person name="Bolanos R."/>
            <person name="Fasulo D."/>
            <person name="Halldorsson B.V."/>
            <person name="Hannenhalli S."/>
            <person name="Turner R."/>
            <person name="Yooseph S."/>
            <person name="Lu F."/>
            <person name="Nusskern D.R."/>
            <person name="Shue B.C."/>
            <person name="Zheng X.H."/>
            <person name="Zhong F."/>
            <person name="Delcher A.L."/>
            <person name="Huson D.H."/>
            <person name="Kravitz S.A."/>
            <person name="Mouchard L."/>
            <person name="Reinert K."/>
            <person name="Remington K.A."/>
            <person name="Clark A.G."/>
            <person name="Waterman M.S."/>
            <person name="Eichler E.E."/>
            <person name="Adams M.D."/>
            <person name="Hunkapiller M.W."/>
            <person name="Myers E.W."/>
            <person name="Venter J.C."/>
        </authorList>
    </citation>
    <scope>NUCLEOTIDE SEQUENCE [LARGE SCALE GENOMIC DNA]</scope>
</reference>
<reference key="5">
    <citation type="journal article" date="2004" name="Genome Res.">
        <title>The status, quality, and expansion of the NIH full-length cDNA project: the Mammalian Gene Collection (MGC).</title>
        <authorList>
            <consortium name="The MGC Project Team"/>
        </authorList>
    </citation>
    <scope>NUCLEOTIDE SEQUENCE [LARGE SCALE MRNA]</scope>
    <source>
        <tissue>Muscle</tissue>
        <tissue>Ovary</tissue>
    </source>
</reference>
<reference key="6">
    <citation type="journal article" date="2001" name="J. Biol. Chem.">
        <title>Atp11p and Atp12p are assembly factors for the F(1)-ATPase in human mitochondria.</title>
        <authorList>
            <person name="Wang Z.-G."/>
            <person name="White P.S."/>
            <person name="Ackerman S.H."/>
        </authorList>
    </citation>
    <scope>FUNCTION</scope>
    <scope>INTERACTION WITH ATP5F1B</scope>
    <scope>SUBCELLULAR LOCATION</scope>
    <scope>TISSUE SPECIFICITY</scope>
</reference>
<reference key="7">
    <citation type="journal article" date="2011" name="BMC Syst. Biol.">
        <title>Initial characterization of the human central proteome.</title>
        <authorList>
            <person name="Burkard T.R."/>
            <person name="Planyavsky M."/>
            <person name="Kaupe I."/>
            <person name="Breitwieser F.P."/>
            <person name="Buerckstuemmer T."/>
            <person name="Bennett K.L."/>
            <person name="Superti-Furga G."/>
            <person name="Colinge J."/>
        </authorList>
    </citation>
    <scope>IDENTIFICATION BY MASS SPECTROMETRY [LARGE SCALE ANALYSIS]</scope>
</reference>
<reference key="8">
    <citation type="journal article" date="2014" name="J. Proteomics">
        <title>An enzyme assisted RP-RPLC approach for in-depth analysis of human liver phosphoproteome.</title>
        <authorList>
            <person name="Bian Y."/>
            <person name="Song C."/>
            <person name="Cheng K."/>
            <person name="Dong M."/>
            <person name="Wang F."/>
            <person name="Huang J."/>
            <person name="Sun D."/>
            <person name="Wang L."/>
            <person name="Ye M."/>
            <person name="Zou H."/>
        </authorList>
    </citation>
    <scope>IDENTIFICATION BY MASS SPECTROMETRY [LARGE SCALE ANALYSIS]</scope>
    <source>
        <tissue>Liver</tissue>
    </source>
</reference>
<reference key="9">
    <citation type="journal article" date="2015" name="Proteomics">
        <title>N-terminome analysis of the human mitochondrial proteome.</title>
        <authorList>
            <person name="Vaca Jacome A.S."/>
            <person name="Rabilloud T."/>
            <person name="Schaeffer-Reiss C."/>
            <person name="Rompais M."/>
            <person name="Ayoub D."/>
            <person name="Lane L."/>
            <person name="Bairoch A."/>
            <person name="Van Dorsselaer A."/>
            <person name="Carapito C."/>
        </authorList>
    </citation>
    <scope>IDENTIFICATION BY MASS SPECTROMETRY [LARGE SCALE ANALYSIS]</scope>
</reference>
<reference key="10">
    <citation type="journal article" date="2017" name="PLoS Comput. Biol.">
        <title>CLIC, a tool for expanding biological pathways based on co-expression across thousands of datasets.</title>
        <authorList>
            <person name="Li Y."/>
            <person name="Jourdain A.A."/>
            <person name="Calvo S.E."/>
            <person name="Liu J.S."/>
            <person name="Mootha V.K."/>
        </authorList>
    </citation>
    <scope>INTERACTION WITH FMC1</scope>
</reference>
<reference key="11">
    <citation type="journal article" date="2004" name="J. Med. Genet.">
        <title>Respiratory chain complex V deficiency due to a mutation in the assembly gene ATP12.</title>
        <authorList>
            <person name="De Meirleir L."/>
            <person name="Seneca S."/>
            <person name="Lissens W."/>
            <person name="De Clercq I."/>
            <person name="Eyskens F."/>
            <person name="Gerlo E."/>
            <person name="Smet J."/>
            <person name="Van Coster R."/>
        </authorList>
    </citation>
    <scope>VARIANT MC5DN1 ARG-94</scope>
</reference>
<keyword id="KW-0143">Chaperone</keyword>
<keyword id="KW-0225">Disease variant</keyword>
<keyword id="KW-0472">Membrane</keyword>
<keyword id="KW-0496">Mitochondrion</keyword>
<keyword id="KW-0999">Mitochondrion inner membrane</keyword>
<keyword id="KW-1274">Primary mitochondrial disease</keyword>
<keyword id="KW-1267">Proteomics identification</keyword>
<keyword id="KW-1185">Reference proteome</keyword>
<keyword id="KW-0809">Transit peptide</keyword>